<protein>
    <recommendedName>
        <fullName evidence="1">Glutamate--tRNA ligase 1</fullName>
        <ecNumber evidence="1">6.1.1.17</ecNumber>
    </recommendedName>
    <alternativeName>
        <fullName evidence="1">Glutamyl-tRNA synthetase 1</fullName>
        <shortName evidence="1">GluRS 1</shortName>
    </alternativeName>
</protein>
<keyword id="KW-0030">Aminoacyl-tRNA synthetase</keyword>
<keyword id="KW-0067">ATP-binding</keyword>
<keyword id="KW-0963">Cytoplasm</keyword>
<keyword id="KW-0436">Ligase</keyword>
<keyword id="KW-0547">Nucleotide-binding</keyword>
<keyword id="KW-0648">Protein biosynthesis</keyword>
<keyword id="KW-1185">Reference proteome</keyword>
<reference key="1">
    <citation type="submission" date="2007-07" db="EMBL/GenBank/DDBJ databases">
        <title>Complete sequence of Fervidobacterium nodosum Rt17-B1.</title>
        <authorList>
            <consortium name="US DOE Joint Genome Institute"/>
            <person name="Copeland A."/>
            <person name="Lucas S."/>
            <person name="Lapidus A."/>
            <person name="Barry K."/>
            <person name="Glavina del Rio T."/>
            <person name="Dalin E."/>
            <person name="Tice H."/>
            <person name="Pitluck S."/>
            <person name="Saunders E."/>
            <person name="Brettin T."/>
            <person name="Bruce D."/>
            <person name="Detter J.C."/>
            <person name="Han C."/>
            <person name="Schmutz J."/>
            <person name="Larimer F."/>
            <person name="Land M."/>
            <person name="Hauser L."/>
            <person name="Kyrpides N."/>
            <person name="Mikhailova N."/>
            <person name="Nelson K."/>
            <person name="Gogarten J.P."/>
            <person name="Noll K."/>
            <person name="Richardson P."/>
        </authorList>
    </citation>
    <scope>NUCLEOTIDE SEQUENCE [LARGE SCALE GENOMIC DNA]</scope>
    <source>
        <strain>ATCC 35602 / DSM 5306 / Rt17-B1</strain>
    </source>
</reference>
<sequence>MSEVRVRFAPSPTGYLHVGGARTALFNYLYARKTGGKFILRIEDTDLERSEKVFEEQLISALKWLGLEWDEGPDIGGQYGPYRQSERVHLYHEYAQKLIEEGKAYEVYAYPEEIEQLREKLLSEGKAPHYTREMLEPYNTPERKKEYEEKGLKPAVYFSMLRKDYVINDVVKGEVVFKAGSVGDFALLRSNGMPTYNYACVIDDGLMKITHVLRGDDHLSNTVKQVALYEAFGWPTPVFGHVSMILGPDGSKLSKRHGATSVEEFKSRGYLPEALVNFLALLGWSHPEGKEILTKQELIESFSLERLVKNPAIFNPEKLKWMNSEHIRMKSMDELVKIAKPFLQKDVDDEYFAKILHAVKDRIEELSQLPELTDIFFEKPHQLPEKTPEAIETYTNLLSELKKIEKWDKDSIYAAFKTAMKSAKLKGKDFYMTLRLVLTGKTEGPELIDILEILGKDEVIERISLYLNK</sequence>
<proteinExistence type="inferred from homology"/>
<gene>
    <name evidence="1" type="primary">gltX1</name>
    <name type="ordered locus">Fnod_0678</name>
</gene>
<accession>A7HKV0</accession>
<comment type="function">
    <text evidence="1">Catalyzes the attachment of glutamate to tRNA(Glu) in a two-step reaction: glutamate is first activated by ATP to form Glu-AMP and then transferred to the acceptor end of tRNA(Glu).</text>
</comment>
<comment type="catalytic activity">
    <reaction evidence="1">
        <text>tRNA(Glu) + L-glutamate + ATP = L-glutamyl-tRNA(Glu) + AMP + diphosphate</text>
        <dbReference type="Rhea" id="RHEA:23540"/>
        <dbReference type="Rhea" id="RHEA-COMP:9663"/>
        <dbReference type="Rhea" id="RHEA-COMP:9680"/>
        <dbReference type="ChEBI" id="CHEBI:29985"/>
        <dbReference type="ChEBI" id="CHEBI:30616"/>
        <dbReference type="ChEBI" id="CHEBI:33019"/>
        <dbReference type="ChEBI" id="CHEBI:78442"/>
        <dbReference type="ChEBI" id="CHEBI:78520"/>
        <dbReference type="ChEBI" id="CHEBI:456215"/>
        <dbReference type="EC" id="6.1.1.17"/>
    </reaction>
</comment>
<comment type="subunit">
    <text evidence="1">Monomer.</text>
</comment>
<comment type="subcellular location">
    <subcellularLocation>
        <location evidence="1">Cytoplasm</location>
    </subcellularLocation>
</comment>
<comment type="similarity">
    <text evidence="1">Belongs to the class-I aminoacyl-tRNA synthetase family. Glutamate--tRNA ligase type 1 subfamily.</text>
</comment>
<organism>
    <name type="scientific">Fervidobacterium nodosum (strain ATCC 35602 / DSM 5306 / Rt17-B1)</name>
    <dbReference type="NCBI Taxonomy" id="381764"/>
    <lineage>
        <taxon>Bacteria</taxon>
        <taxon>Thermotogati</taxon>
        <taxon>Thermotogota</taxon>
        <taxon>Thermotogae</taxon>
        <taxon>Thermotogales</taxon>
        <taxon>Fervidobacteriaceae</taxon>
        <taxon>Fervidobacterium</taxon>
    </lineage>
</organism>
<feature type="chain" id="PRO_0000367672" description="Glutamate--tRNA ligase 1">
    <location>
        <begin position="1"/>
        <end position="469"/>
    </location>
</feature>
<feature type="short sequence motif" description="'HIGH' region" evidence="1">
    <location>
        <begin position="10"/>
        <end position="20"/>
    </location>
</feature>
<feature type="short sequence motif" description="'KMSKS' region" evidence="1">
    <location>
        <begin position="252"/>
        <end position="256"/>
    </location>
</feature>
<feature type="binding site" evidence="1">
    <location>
        <position position="255"/>
    </location>
    <ligand>
        <name>ATP</name>
        <dbReference type="ChEBI" id="CHEBI:30616"/>
    </ligand>
</feature>
<name>SYE1_FERNB</name>
<evidence type="ECO:0000255" key="1">
    <source>
        <dbReference type="HAMAP-Rule" id="MF_00022"/>
    </source>
</evidence>
<dbReference type="EC" id="6.1.1.17" evidence="1"/>
<dbReference type="EMBL" id="CP000771">
    <property type="protein sequence ID" value="ABS60533.1"/>
    <property type="molecule type" value="Genomic_DNA"/>
</dbReference>
<dbReference type="RefSeq" id="WP_011993852.1">
    <property type="nucleotide sequence ID" value="NC_009718.1"/>
</dbReference>
<dbReference type="SMR" id="A7HKV0"/>
<dbReference type="STRING" id="381764.Fnod_0678"/>
<dbReference type="KEGG" id="fno:Fnod_0678"/>
<dbReference type="eggNOG" id="COG0008">
    <property type="taxonomic scope" value="Bacteria"/>
</dbReference>
<dbReference type="HOGENOM" id="CLU_015768_6_3_0"/>
<dbReference type="OrthoDB" id="9807503at2"/>
<dbReference type="Proteomes" id="UP000002415">
    <property type="component" value="Chromosome"/>
</dbReference>
<dbReference type="GO" id="GO:0005829">
    <property type="term" value="C:cytosol"/>
    <property type="evidence" value="ECO:0007669"/>
    <property type="project" value="TreeGrafter"/>
</dbReference>
<dbReference type="GO" id="GO:0005524">
    <property type="term" value="F:ATP binding"/>
    <property type="evidence" value="ECO:0007669"/>
    <property type="project" value="UniProtKB-UniRule"/>
</dbReference>
<dbReference type="GO" id="GO:0004818">
    <property type="term" value="F:glutamate-tRNA ligase activity"/>
    <property type="evidence" value="ECO:0007669"/>
    <property type="project" value="UniProtKB-UniRule"/>
</dbReference>
<dbReference type="GO" id="GO:0000049">
    <property type="term" value="F:tRNA binding"/>
    <property type="evidence" value="ECO:0007669"/>
    <property type="project" value="InterPro"/>
</dbReference>
<dbReference type="GO" id="GO:0008270">
    <property type="term" value="F:zinc ion binding"/>
    <property type="evidence" value="ECO:0007669"/>
    <property type="project" value="InterPro"/>
</dbReference>
<dbReference type="GO" id="GO:0006424">
    <property type="term" value="P:glutamyl-tRNA aminoacylation"/>
    <property type="evidence" value="ECO:0007669"/>
    <property type="project" value="UniProtKB-UniRule"/>
</dbReference>
<dbReference type="CDD" id="cd00808">
    <property type="entry name" value="GluRS_core"/>
    <property type="match status" value="1"/>
</dbReference>
<dbReference type="FunFam" id="3.40.50.620:FF:000045">
    <property type="entry name" value="Glutamate--tRNA ligase, mitochondrial"/>
    <property type="match status" value="1"/>
</dbReference>
<dbReference type="Gene3D" id="1.10.10.350">
    <property type="match status" value="1"/>
</dbReference>
<dbReference type="Gene3D" id="1.10.8.70">
    <property type="entry name" value="Glutamate-tRNA synthetase, class I, anticodon-binding domain 1"/>
    <property type="match status" value="1"/>
</dbReference>
<dbReference type="Gene3D" id="3.40.50.620">
    <property type="entry name" value="HUPs"/>
    <property type="match status" value="1"/>
</dbReference>
<dbReference type="HAMAP" id="MF_00022">
    <property type="entry name" value="Glu_tRNA_synth_type1"/>
    <property type="match status" value="1"/>
</dbReference>
<dbReference type="InterPro" id="IPR045462">
    <property type="entry name" value="aa-tRNA-synth_I_cd-bd"/>
</dbReference>
<dbReference type="InterPro" id="IPR020751">
    <property type="entry name" value="aa-tRNA-synth_I_codon-bd_sub2"/>
</dbReference>
<dbReference type="InterPro" id="IPR001412">
    <property type="entry name" value="aa-tRNA-synth_I_CS"/>
</dbReference>
<dbReference type="InterPro" id="IPR008925">
    <property type="entry name" value="aa_tRNA-synth_I_cd-bd_sf"/>
</dbReference>
<dbReference type="InterPro" id="IPR004527">
    <property type="entry name" value="Glu-tRNA-ligase_bac/mito"/>
</dbReference>
<dbReference type="InterPro" id="IPR020752">
    <property type="entry name" value="Glu-tRNA-synth_I_codon-bd_sub1"/>
</dbReference>
<dbReference type="InterPro" id="IPR000924">
    <property type="entry name" value="Glu/Gln-tRNA-synth"/>
</dbReference>
<dbReference type="InterPro" id="IPR020058">
    <property type="entry name" value="Glu/Gln-tRNA-synth_Ib_cat-dom"/>
</dbReference>
<dbReference type="InterPro" id="IPR049940">
    <property type="entry name" value="GluQ/Sye"/>
</dbReference>
<dbReference type="InterPro" id="IPR033910">
    <property type="entry name" value="GluRS_core"/>
</dbReference>
<dbReference type="InterPro" id="IPR014729">
    <property type="entry name" value="Rossmann-like_a/b/a_fold"/>
</dbReference>
<dbReference type="NCBIfam" id="TIGR00464">
    <property type="entry name" value="gltX_bact"/>
    <property type="match status" value="1"/>
</dbReference>
<dbReference type="PANTHER" id="PTHR43311">
    <property type="entry name" value="GLUTAMATE--TRNA LIGASE"/>
    <property type="match status" value="1"/>
</dbReference>
<dbReference type="PANTHER" id="PTHR43311:SF2">
    <property type="entry name" value="GLUTAMATE--TRNA LIGASE, MITOCHONDRIAL-RELATED"/>
    <property type="match status" value="1"/>
</dbReference>
<dbReference type="Pfam" id="PF19269">
    <property type="entry name" value="Anticodon_2"/>
    <property type="match status" value="1"/>
</dbReference>
<dbReference type="Pfam" id="PF00749">
    <property type="entry name" value="tRNA-synt_1c"/>
    <property type="match status" value="1"/>
</dbReference>
<dbReference type="PRINTS" id="PR00987">
    <property type="entry name" value="TRNASYNTHGLU"/>
</dbReference>
<dbReference type="SUPFAM" id="SSF48163">
    <property type="entry name" value="An anticodon-binding domain of class I aminoacyl-tRNA synthetases"/>
    <property type="match status" value="1"/>
</dbReference>
<dbReference type="SUPFAM" id="SSF52374">
    <property type="entry name" value="Nucleotidylyl transferase"/>
    <property type="match status" value="1"/>
</dbReference>
<dbReference type="PROSITE" id="PS00178">
    <property type="entry name" value="AA_TRNA_LIGASE_I"/>
    <property type="match status" value="1"/>
</dbReference>